<keyword id="KW-0472">Membrane</keyword>
<keyword id="KW-0496">Mitochondrion</keyword>
<keyword id="KW-1185">Reference proteome</keyword>
<keyword id="KW-0809">Transit peptide</keyword>
<keyword id="KW-0812">Transmembrane</keyword>
<keyword id="KW-1133">Transmembrane helix</keyword>
<accession>Q751C1</accession>
<organism>
    <name type="scientific">Eremothecium gossypii (strain ATCC 10895 / CBS 109.51 / FGSC 9923 / NRRL Y-1056)</name>
    <name type="common">Yeast</name>
    <name type="synonym">Ashbya gossypii</name>
    <dbReference type="NCBI Taxonomy" id="284811"/>
    <lineage>
        <taxon>Eukaryota</taxon>
        <taxon>Fungi</taxon>
        <taxon>Dikarya</taxon>
        <taxon>Ascomycota</taxon>
        <taxon>Saccharomycotina</taxon>
        <taxon>Saccharomycetes</taxon>
        <taxon>Saccharomycetales</taxon>
        <taxon>Saccharomycetaceae</taxon>
        <taxon>Eremothecium</taxon>
    </lineage>
</organism>
<protein>
    <recommendedName>
        <fullName>Altered inheritance of mitochondria protein 39, mitochondrial</fullName>
    </recommendedName>
</protein>
<feature type="transit peptide" description="Mitochondrion" evidence="1">
    <location>
        <begin position="1"/>
        <end position="86"/>
    </location>
</feature>
<feature type="chain" id="PRO_0000399842" description="Altered inheritance of mitochondria protein 39, mitochondrial">
    <location>
        <begin position="87"/>
        <end position="333"/>
    </location>
</feature>
<feature type="transmembrane region" description="Helical" evidence="1">
    <location>
        <begin position="94"/>
        <end position="114"/>
    </location>
</feature>
<feature type="region of interest" description="Disordered" evidence="2">
    <location>
        <begin position="32"/>
        <end position="56"/>
    </location>
</feature>
<sequence>MIRLLGLTTRRVAVRTPVTALYSTGKPIDPKHIFTDPQTNRIRDPPNYFQKGRGRGTEDAPLPADMHYGMGAQEAVSEAIGASIRQQRARKRRGILLALVVAVFGTVFGYSIGYRVFYKHSESFLPLWPAKRSRPLSEKDAANLRVAEVKRMAEFRVFERLSMHKMIKEQFGVPLHTQDGKKPETNVFVLWCEDQDPCITGLLFRPSGSHAPDHGHTWHDFLGLVQWRVTHRPVSIRNAAERVLNFIGLGTSDLFQMVDPSKVYGDFKYEFPLPKRNDNDHAMHICFLGEMPLGPDSLVVYRGKYHVGVRLDQVDLFRREDGKLIRYVLYKNS</sequence>
<evidence type="ECO:0000255" key="1"/>
<evidence type="ECO:0000256" key="2">
    <source>
        <dbReference type="SAM" id="MobiDB-lite"/>
    </source>
</evidence>
<evidence type="ECO:0000305" key="3"/>
<dbReference type="EMBL" id="AE016820">
    <property type="protein sequence ID" value="AAS54276.1"/>
    <property type="molecule type" value="Genomic_DNA"/>
</dbReference>
<dbReference type="RefSeq" id="NP_986452.1">
    <property type="nucleotide sequence ID" value="NM_211514.1"/>
</dbReference>
<dbReference type="FunCoup" id="Q751C1">
    <property type="interactions" value="34"/>
</dbReference>
<dbReference type="EnsemblFungi" id="AAS54276">
    <property type="protein sequence ID" value="AAS54276"/>
    <property type="gene ID" value="AGOS_AGL215W"/>
</dbReference>
<dbReference type="GeneID" id="4622745"/>
<dbReference type="KEGG" id="ago:AGOS_AGL215W"/>
<dbReference type="eggNOG" id="ENOG502QT12">
    <property type="taxonomic scope" value="Eukaryota"/>
</dbReference>
<dbReference type="HOGENOM" id="CLU_058942_0_0_1"/>
<dbReference type="InParanoid" id="Q751C1"/>
<dbReference type="OMA" id="WCEDQDP"/>
<dbReference type="OrthoDB" id="4058511at2759"/>
<dbReference type="Proteomes" id="UP000000591">
    <property type="component" value="Chromosome VII"/>
</dbReference>
<dbReference type="GO" id="GO:0031966">
    <property type="term" value="C:mitochondrial membrane"/>
    <property type="evidence" value="ECO:0007669"/>
    <property type="project" value="UniProtKB-SubCell"/>
</dbReference>
<proteinExistence type="inferred from homology"/>
<reference key="1">
    <citation type="journal article" date="2004" name="Science">
        <title>The Ashbya gossypii genome as a tool for mapping the ancient Saccharomyces cerevisiae genome.</title>
        <authorList>
            <person name="Dietrich F.S."/>
            <person name="Voegeli S."/>
            <person name="Brachat S."/>
            <person name="Lerch A."/>
            <person name="Gates K."/>
            <person name="Steiner S."/>
            <person name="Mohr C."/>
            <person name="Poehlmann R."/>
            <person name="Luedi P."/>
            <person name="Choi S."/>
            <person name="Wing R.A."/>
            <person name="Flavier A."/>
            <person name="Gaffney T.D."/>
            <person name="Philippsen P."/>
        </authorList>
    </citation>
    <scope>NUCLEOTIDE SEQUENCE [LARGE SCALE GENOMIC DNA]</scope>
    <source>
        <strain>ATCC 10895 / CBS 109.51 / FGSC 9923 / NRRL Y-1056</strain>
    </source>
</reference>
<reference key="2">
    <citation type="journal article" date="2013" name="G3 (Bethesda)">
        <title>Genomes of Ashbya fungi isolated from insects reveal four mating-type loci, numerous translocations, lack of transposons, and distinct gene duplications.</title>
        <authorList>
            <person name="Dietrich F.S."/>
            <person name="Voegeli S."/>
            <person name="Kuo S."/>
            <person name="Philippsen P."/>
        </authorList>
    </citation>
    <scope>GENOME REANNOTATION</scope>
    <source>
        <strain>ATCC 10895 / CBS 109.51 / FGSC 9923 / NRRL Y-1056</strain>
    </source>
</reference>
<gene>
    <name type="primary">AIM39</name>
    <name type="ordered locus">AGL215W</name>
</gene>
<name>AIM39_EREGS</name>
<comment type="subcellular location">
    <subcellularLocation>
        <location evidence="3">Mitochondrion membrane</location>
        <topology evidence="3">Single-pass membrane protein</topology>
    </subcellularLocation>
</comment>
<comment type="similarity">
    <text evidence="3">Belongs to the AIM39 family.</text>
</comment>